<evidence type="ECO:0000255" key="1">
    <source>
        <dbReference type="PROSITE-ProRule" id="PRU00448"/>
    </source>
</evidence>
<evidence type="ECO:0000256" key="2">
    <source>
        <dbReference type="SAM" id="MobiDB-lite"/>
    </source>
</evidence>
<evidence type="ECO:0000269" key="3">
    <source>
    </source>
</evidence>
<evidence type="ECO:0000303" key="4">
    <source>
    </source>
</evidence>
<evidence type="ECO:0000303" key="5">
    <source>
    </source>
</evidence>
<evidence type="ECO:0000305" key="6"/>
<evidence type="ECO:0007744" key="7">
    <source>
    </source>
</evidence>
<evidence type="ECO:0007744" key="8">
    <source>
    </source>
</evidence>
<evidence type="ECO:0007744" key="9">
    <source>
    </source>
</evidence>
<evidence type="ECO:0007829" key="10">
    <source>
        <dbReference type="PDB" id="2JJZ"/>
    </source>
</evidence>
<organism>
    <name type="scientific">Homo sapiens</name>
    <name type="common">Human</name>
    <dbReference type="NCBI Taxonomy" id="9606"/>
    <lineage>
        <taxon>Eukaryota</taxon>
        <taxon>Metazoa</taxon>
        <taxon>Chordata</taxon>
        <taxon>Craniata</taxon>
        <taxon>Vertebrata</taxon>
        <taxon>Euteleostomi</taxon>
        <taxon>Mammalia</taxon>
        <taxon>Eutheria</taxon>
        <taxon>Euarchontoglires</taxon>
        <taxon>Primates</taxon>
        <taxon>Haplorrhini</taxon>
        <taxon>Catarrhini</taxon>
        <taxon>Hominidae</taxon>
        <taxon>Homo</taxon>
    </lineage>
</organism>
<gene>
    <name type="primary">AIF1L</name>
    <name type="synonym">C9orf58</name>
    <name type="synonym">IBA2</name>
    <name type="ORF">UNQ672/PRO1306</name>
</gene>
<reference key="1">
    <citation type="journal article" date="2001" name="Genome Res.">
        <title>Towards a catalog of human genes and proteins: sequencing and analysis of 500 novel complete protein coding human cDNAs.</title>
        <authorList>
            <person name="Wiemann S."/>
            <person name="Weil B."/>
            <person name="Wellenreuther R."/>
            <person name="Gassenhuber J."/>
            <person name="Glassl S."/>
            <person name="Ansorge W."/>
            <person name="Boecher M."/>
            <person name="Bloecker H."/>
            <person name="Bauersachs S."/>
            <person name="Blum H."/>
            <person name="Lauber J."/>
            <person name="Duesterhoeft A."/>
            <person name="Beyer A."/>
            <person name="Koehrer K."/>
            <person name="Strack N."/>
            <person name="Mewes H.-W."/>
            <person name="Ottenwaelder B."/>
            <person name="Obermaier B."/>
            <person name="Tampe J."/>
            <person name="Heubner D."/>
            <person name="Wambutt R."/>
            <person name="Korn B."/>
            <person name="Klein M."/>
            <person name="Poustka A."/>
        </authorList>
    </citation>
    <scope>NUCLEOTIDE SEQUENCE [LARGE SCALE MRNA] (ISOFORM 1)</scope>
    <source>
        <tissue>Amygdala</tissue>
    </source>
</reference>
<reference key="2">
    <citation type="journal article" date="2003" name="Genome Res.">
        <title>The secreted protein discovery initiative (SPDI), a large-scale effort to identify novel human secreted and transmembrane proteins: a bioinformatics assessment.</title>
        <authorList>
            <person name="Clark H.F."/>
            <person name="Gurney A.L."/>
            <person name="Abaya E."/>
            <person name="Baker K."/>
            <person name="Baldwin D.T."/>
            <person name="Brush J."/>
            <person name="Chen J."/>
            <person name="Chow B."/>
            <person name="Chui C."/>
            <person name="Crowley C."/>
            <person name="Currell B."/>
            <person name="Deuel B."/>
            <person name="Dowd P."/>
            <person name="Eaton D."/>
            <person name="Foster J.S."/>
            <person name="Grimaldi C."/>
            <person name="Gu Q."/>
            <person name="Hass P.E."/>
            <person name="Heldens S."/>
            <person name="Huang A."/>
            <person name="Kim H.S."/>
            <person name="Klimowski L."/>
            <person name="Jin Y."/>
            <person name="Johnson S."/>
            <person name="Lee J."/>
            <person name="Lewis L."/>
            <person name="Liao D."/>
            <person name="Mark M.R."/>
            <person name="Robbie E."/>
            <person name="Sanchez C."/>
            <person name="Schoenfeld J."/>
            <person name="Seshagiri S."/>
            <person name="Simmons L."/>
            <person name="Singh J."/>
            <person name="Smith V."/>
            <person name="Stinson J."/>
            <person name="Vagts A."/>
            <person name="Vandlen R.L."/>
            <person name="Watanabe C."/>
            <person name="Wieand D."/>
            <person name="Woods K."/>
            <person name="Xie M.-H."/>
            <person name="Yansura D.G."/>
            <person name="Yi S."/>
            <person name="Yu G."/>
            <person name="Yuan J."/>
            <person name="Zhang M."/>
            <person name="Zhang Z."/>
            <person name="Goddard A.D."/>
            <person name="Wood W.I."/>
            <person name="Godowski P.J."/>
            <person name="Gray A.M."/>
        </authorList>
    </citation>
    <scope>NUCLEOTIDE SEQUENCE [LARGE SCALE MRNA] (ISOFORM 1)</scope>
</reference>
<reference key="3">
    <citation type="journal article" date="2004" name="Nat. Genet.">
        <title>Complete sequencing and characterization of 21,243 full-length human cDNAs.</title>
        <authorList>
            <person name="Ota T."/>
            <person name="Suzuki Y."/>
            <person name="Nishikawa T."/>
            <person name="Otsuki T."/>
            <person name="Sugiyama T."/>
            <person name="Irie R."/>
            <person name="Wakamatsu A."/>
            <person name="Hayashi K."/>
            <person name="Sato H."/>
            <person name="Nagai K."/>
            <person name="Kimura K."/>
            <person name="Makita H."/>
            <person name="Sekine M."/>
            <person name="Obayashi M."/>
            <person name="Nishi T."/>
            <person name="Shibahara T."/>
            <person name="Tanaka T."/>
            <person name="Ishii S."/>
            <person name="Yamamoto J."/>
            <person name="Saito K."/>
            <person name="Kawai Y."/>
            <person name="Isono Y."/>
            <person name="Nakamura Y."/>
            <person name="Nagahari K."/>
            <person name="Murakami K."/>
            <person name="Yasuda T."/>
            <person name="Iwayanagi T."/>
            <person name="Wagatsuma M."/>
            <person name="Shiratori A."/>
            <person name="Sudo H."/>
            <person name="Hosoiri T."/>
            <person name="Kaku Y."/>
            <person name="Kodaira H."/>
            <person name="Kondo H."/>
            <person name="Sugawara M."/>
            <person name="Takahashi M."/>
            <person name="Kanda K."/>
            <person name="Yokoi T."/>
            <person name="Furuya T."/>
            <person name="Kikkawa E."/>
            <person name="Omura Y."/>
            <person name="Abe K."/>
            <person name="Kamihara K."/>
            <person name="Katsuta N."/>
            <person name="Sato K."/>
            <person name="Tanikawa M."/>
            <person name="Yamazaki M."/>
            <person name="Ninomiya K."/>
            <person name="Ishibashi T."/>
            <person name="Yamashita H."/>
            <person name="Murakawa K."/>
            <person name="Fujimori K."/>
            <person name="Tanai H."/>
            <person name="Kimata M."/>
            <person name="Watanabe M."/>
            <person name="Hiraoka S."/>
            <person name="Chiba Y."/>
            <person name="Ishida S."/>
            <person name="Ono Y."/>
            <person name="Takiguchi S."/>
            <person name="Watanabe S."/>
            <person name="Yosida M."/>
            <person name="Hotuta T."/>
            <person name="Kusano J."/>
            <person name="Kanehori K."/>
            <person name="Takahashi-Fujii A."/>
            <person name="Hara H."/>
            <person name="Tanase T.-O."/>
            <person name="Nomura Y."/>
            <person name="Togiya S."/>
            <person name="Komai F."/>
            <person name="Hara R."/>
            <person name="Takeuchi K."/>
            <person name="Arita M."/>
            <person name="Imose N."/>
            <person name="Musashino K."/>
            <person name="Yuuki H."/>
            <person name="Oshima A."/>
            <person name="Sasaki N."/>
            <person name="Aotsuka S."/>
            <person name="Yoshikawa Y."/>
            <person name="Matsunawa H."/>
            <person name="Ichihara T."/>
            <person name="Shiohata N."/>
            <person name="Sano S."/>
            <person name="Moriya S."/>
            <person name="Momiyama H."/>
            <person name="Satoh N."/>
            <person name="Takami S."/>
            <person name="Terashima Y."/>
            <person name="Suzuki O."/>
            <person name="Nakagawa S."/>
            <person name="Senoh A."/>
            <person name="Mizoguchi H."/>
            <person name="Goto Y."/>
            <person name="Shimizu F."/>
            <person name="Wakebe H."/>
            <person name="Hishigaki H."/>
            <person name="Watanabe T."/>
            <person name="Sugiyama A."/>
            <person name="Takemoto M."/>
            <person name="Kawakami B."/>
            <person name="Yamazaki M."/>
            <person name="Watanabe K."/>
            <person name="Kumagai A."/>
            <person name="Itakura S."/>
            <person name="Fukuzumi Y."/>
            <person name="Fujimori Y."/>
            <person name="Komiyama M."/>
            <person name="Tashiro H."/>
            <person name="Tanigami A."/>
            <person name="Fujiwara T."/>
            <person name="Ono T."/>
            <person name="Yamada K."/>
            <person name="Fujii Y."/>
            <person name="Ozaki K."/>
            <person name="Hirao M."/>
            <person name="Ohmori Y."/>
            <person name="Kawabata A."/>
            <person name="Hikiji T."/>
            <person name="Kobatake N."/>
            <person name="Inagaki H."/>
            <person name="Ikema Y."/>
            <person name="Okamoto S."/>
            <person name="Okitani R."/>
            <person name="Kawakami T."/>
            <person name="Noguchi S."/>
            <person name="Itoh T."/>
            <person name="Shigeta K."/>
            <person name="Senba T."/>
            <person name="Matsumura K."/>
            <person name="Nakajima Y."/>
            <person name="Mizuno T."/>
            <person name="Morinaga M."/>
            <person name="Sasaki M."/>
            <person name="Togashi T."/>
            <person name="Oyama M."/>
            <person name="Hata H."/>
            <person name="Watanabe M."/>
            <person name="Komatsu T."/>
            <person name="Mizushima-Sugano J."/>
            <person name="Satoh T."/>
            <person name="Shirai Y."/>
            <person name="Takahashi Y."/>
            <person name="Nakagawa K."/>
            <person name="Okumura K."/>
            <person name="Nagase T."/>
            <person name="Nomura N."/>
            <person name="Kikuchi H."/>
            <person name="Masuho Y."/>
            <person name="Yamashita R."/>
            <person name="Nakai K."/>
            <person name="Yada T."/>
            <person name="Nakamura Y."/>
            <person name="Ohara O."/>
            <person name="Isogai T."/>
            <person name="Sugano S."/>
        </authorList>
    </citation>
    <scope>NUCLEOTIDE SEQUENCE [LARGE SCALE MRNA] (ISOFORMS 1; 2 AND 3)</scope>
    <source>
        <tissue>Kidney</tissue>
        <tissue>Placenta</tissue>
        <tissue>Teratocarcinoma</tissue>
        <tissue>Trachea</tissue>
    </source>
</reference>
<reference key="4">
    <citation type="journal article" date="2007" name="BMC Genomics">
        <title>The full-ORF clone resource of the German cDNA consortium.</title>
        <authorList>
            <person name="Bechtel S."/>
            <person name="Rosenfelder H."/>
            <person name="Duda A."/>
            <person name="Schmidt C.P."/>
            <person name="Ernst U."/>
            <person name="Wellenreuther R."/>
            <person name="Mehrle A."/>
            <person name="Schuster C."/>
            <person name="Bahr A."/>
            <person name="Bloecker H."/>
            <person name="Heubner D."/>
            <person name="Hoerlein A."/>
            <person name="Michel G."/>
            <person name="Wedler H."/>
            <person name="Koehrer K."/>
            <person name="Ottenwaelder B."/>
            <person name="Poustka A."/>
            <person name="Wiemann S."/>
            <person name="Schupp I."/>
        </authorList>
    </citation>
    <scope>NUCLEOTIDE SEQUENCE [LARGE SCALE MRNA] (ISOFORM 1)</scope>
    <source>
        <tissue>Amygdala</tissue>
    </source>
</reference>
<reference key="5">
    <citation type="journal article" date="2004" name="Nature">
        <title>DNA sequence and analysis of human chromosome 9.</title>
        <authorList>
            <person name="Humphray S.J."/>
            <person name="Oliver K."/>
            <person name="Hunt A.R."/>
            <person name="Plumb R.W."/>
            <person name="Loveland J.E."/>
            <person name="Howe K.L."/>
            <person name="Andrews T.D."/>
            <person name="Searle S."/>
            <person name="Hunt S.E."/>
            <person name="Scott C.E."/>
            <person name="Jones M.C."/>
            <person name="Ainscough R."/>
            <person name="Almeida J.P."/>
            <person name="Ambrose K.D."/>
            <person name="Ashwell R.I.S."/>
            <person name="Babbage A.K."/>
            <person name="Babbage S."/>
            <person name="Bagguley C.L."/>
            <person name="Bailey J."/>
            <person name="Banerjee R."/>
            <person name="Barker D.J."/>
            <person name="Barlow K.F."/>
            <person name="Bates K."/>
            <person name="Beasley H."/>
            <person name="Beasley O."/>
            <person name="Bird C.P."/>
            <person name="Bray-Allen S."/>
            <person name="Brown A.J."/>
            <person name="Brown J.Y."/>
            <person name="Burford D."/>
            <person name="Burrill W."/>
            <person name="Burton J."/>
            <person name="Carder C."/>
            <person name="Carter N.P."/>
            <person name="Chapman J.C."/>
            <person name="Chen Y."/>
            <person name="Clarke G."/>
            <person name="Clark S.Y."/>
            <person name="Clee C.M."/>
            <person name="Clegg S."/>
            <person name="Collier R.E."/>
            <person name="Corby N."/>
            <person name="Crosier M."/>
            <person name="Cummings A.T."/>
            <person name="Davies J."/>
            <person name="Dhami P."/>
            <person name="Dunn M."/>
            <person name="Dutta I."/>
            <person name="Dyer L.W."/>
            <person name="Earthrowl M.E."/>
            <person name="Faulkner L."/>
            <person name="Fleming C.J."/>
            <person name="Frankish A."/>
            <person name="Frankland J.A."/>
            <person name="French L."/>
            <person name="Fricker D.G."/>
            <person name="Garner P."/>
            <person name="Garnett J."/>
            <person name="Ghori J."/>
            <person name="Gilbert J.G.R."/>
            <person name="Glison C."/>
            <person name="Grafham D.V."/>
            <person name="Gribble S."/>
            <person name="Griffiths C."/>
            <person name="Griffiths-Jones S."/>
            <person name="Grocock R."/>
            <person name="Guy J."/>
            <person name="Hall R.E."/>
            <person name="Hammond S."/>
            <person name="Harley J.L."/>
            <person name="Harrison E.S.I."/>
            <person name="Hart E.A."/>
            <person name="Heath P.D."/>
            <person name="Henderson C.D."/>
            <person name="Hopkins B.L."/>
            <person name="Howard P.J."/>
            <person name="Howden P.J."/>
            <person name="Huckle E."/>
            <person name="Johnson C."/>
            <person name="Johnson D."/>
            <person name="Joy A.A."/>
            <person name="Kay M."/>
            <person name="Keenan S."/>
            <person name="Kershaw J.K."/>
            <person name="Kimberley A.M."/>
            <person name="King A."/>
            <person name="Knights A."/>
            <person name="Laird G.K."/>
            <person name="Langford C."/>
            <person name="Lawlor S."/>
            <person name="Leongamornlert D.A."/>
            <person name="Leversha M."/>
            <person name="Lloyd C."/>
            <person name="Lloyd D.M."/>
            <person name="Lovell J."/>
            <person name="Martin S."/>
            <person name="Mashreghi-Mohammadi M."/>
            <person name="Matthews L."/>
            <person name="McLaren S."/>
            <person name="McLay K.E."/>
            <person name="McMurray A."/>
            <person name="Milne S."/>
            <person name="Nickerson T."/>
            <person name="Nisbett J."/>
            <person name="Nordsiek G."/>
            <person name="Pearce A.V."/>
            <person name="Peck A.I."/>
            <person name="Porter K.M."/>
            <person name="Pandian R."/>
            <person name="Pelan S."/>
            <person name="Phillimore B."/>
            <person name="Povey S."/>
            <person name="Ramsey Y."/>
            <person name="Rand V."/>
            <person name="Scharfe M."/>
            <person name="Sehra H.K."/>
            <person name="Shownkeen R."/>
            <person name="Sims S.K."/>
            <person name="Skuce C.D."/>
            <person name="Smith M."/>
            <person name="Steward C.A."/>
            <person name="Swarbreck D."/>
            <person name="Sycamore N."/>
            <person name="Tester J."/>
            <person name="Thorpe A."/>
            <person name="Tracey A."/>
            <person name="Tromans A."/>
            <person name="Thomas D.W."/>
            <person name="Wall M."/>
            <person name="Wallis J.M."/>
            <person name="West A.P."/>
            <person name="Whitehead S.L."/>
            <person name="Willey D.L."/>
            <person name="Williams S.A."/>
            <person name="Wilming L."/>
            <person name="Wray P.W."/>
            <person name="Young L."/>
            <person name="Ashurst J.L."/>
            <person name="Coulson A."/>
            <person name="Blocker H."/>
            <person name="Durbin R.M."/>
            <person name="Sulston J.E."/>
            <person name="Hubbard T."/>
            <person name="Jackson M.J."/>
            <person name="Bentley D.R."/>
            <person name="Beck S."/>
            <person name="Rogers J."/>
            <person name="Dunham I."/>
        </authorList>
    </citation>
    <scope>NUCLEOTIDE SEQUENCE [LARGE SCALE GENOMIC DNA]</scope>
</reference>
<reference key="6">
    <citation type="submission" date="2005-07" db="EMBL/GenBank/DDBJ databases">
        <authorList>
            <person name="Mural R.J."/>
            <person name="Istrail S."/>
            <person name="Sutton G.G."/>
            <person name="Florea L."/>
            <person name="Halpern A.L."/>
            <person name="Mobarry C.M."/>
            <person name="Lippert R."/>
            <person name="Walenz B."/>
            <person name="Shatkay H."/>
            <person name="Dew I."/>
            <person name="Miller J.R."/>
            <person name="Flanigan M.J."/>
            <person name="Edwards N.J."/>
            <person name="Bolanos R."/>
            <person name="Fasulo D."/>
            <person name="Halldorsson B.V."/>
            <person name="Hannenhalli S."/>
            <person name="Turner R."/>
            <person name="Yooseph S."/>
            <person name="Lu F."/>
            <person name="Nusskern D.R."/>
            <person name="Shue B.C."/>
            <person name="Zheng X.H."/>
            <person name="Zhong F."/>
            <person name="Delcher A.L."/>
            <person name="Huson D.H."/>
            <person name="Kravitz S.A."/>
            <person name="Mouchard L."/>
            <person name="Reinert K."/>
            <person name="Remington K.A."/>
            <person name="Clark A.G."/>
            <person name="Waterman M.S."/>
            <person name="Eichler E.E."/>
            <person name="Adams M.D."/>
            <person name="Hunkapiller M.W."/>
            <person name="Myers E.W."/>
            <person name="Venter J.C."/>
        </authorList>
    </citation>
    <scope>NUCLEOTIDE SEQUENCE [LARGE SCALE GENOMIC DNA]</scope>
</reference>
<reference key="7">
    <citation type="journal article" date="2004" name="Genome Res.">
        <title>The status, quality, and expansion of the NIH full-length cDNA project: the Mammalian Gene Collection (MGC).</title>
        <authorList>
            <consortium name="The MGC Project Team"/>
        </authorList>
    </citation>
    <scope>NUCLEOTIDE SEQUENCE [LARGE SCALE MRNA] (ISOFORM 4)</scope>
    <source>
        <tissue>Placenta</tissue>
    </source>
</reference>
<reference key="8">
    <citation type="journal article" date="2008" name="Proc. Natl. Acad. Sci. U.S.A.">
        <title>A quantitative atlas of mitotic phosphorylation.</title>
        <authorList>
            <person name="Dephoure N."/>
            <person name="Zhou C."/>
            <person name="Villen J."/>
            <person name="Beausoleil S.A."/>
            <person name="Bakalarski C.E."/>
            <person name="Elledge S.J."/>
            <person name="Gygi S.P."/>
        </authorList>
    </citation>
    <scope>IDENTIFICATION BY MASS SPECTROMETRY [LARGE SCALE ANALYSIS]</scope>
    <source>
        <tissue>Cervix carcinoma</tissue>
    </source>
</reference>
<reference key="9">
    <citation type="journal article" date="2009" name="Anal. Chem.">
        <title>Lys-N and trypsin cover complementary parts of the phosphoproteome in a refined SCX-based approach.</title>
        <authorList>
            <person name="Gauci S."/>
            <person name="Helbig A.O."/>
            <person name="Slijper M."/>
            <person name="Krijgsveld J."/>
            <person name="Heck A.J."/>
            <person name="Mohammed S."/>
        </authorList>
    </citation>
    <scope>ACETYLATION [LARGE SCALE ANALYSIS] AT SER-2</scope>
    <scope>CLEAVAGE OF INITIATOR METHIONINE [LARGE SCALE ANALYSIS]</scope>
    <scope>IDENTIFICATION BY MASS SPECTROMETRY [LARGE SCALE ANALYSIS]</scope>
</reference>
<reference key="10">
    <citation type="journal article" date="2011" name="Sci. Signal.">
        <title>System-wide temporal characterization of the proteome and phosphoproteome of human embryonic stem cell differentiation.</title>
        <authorList>
            <person name="Rigbolt K.T."/>
            <person name="Prokhorova T.A."/>
            <person name="Akimov V."/>
            <person name="Henningsen J."/>
            <person name="Johansen P.T."/>
            <person name="Kratchmarova I."/>
            <person name="Kassem M."/>
            <person name="Mann M."/>
            <person name="Olsen J.V."/>
            <person name="Blagoev B."/>
        </authorList>
    </citation>
    <scope>ACETYLATION [LARGE SCALE ANALYSIS] AT SER-2</scope>
    <scope>PHOSPHORYLATION [LARGE SCALE ANALYSIS] AT SER-2</scope>
    <scope>CLEAVAGE OF INITIATOR METHIONINE [LARGE SCALE ANALYSIS]</scope>
    <scope>IDENTIFICATION BY MASS SPECTROMETRY [LARGE SCALE ANALYSIS]</scope>
</reference>
<reference key="11">
    <citation type="journal article" date="2013" name="J. Proteome Res.">
        <title>Toward a comprehensive characterization of a human cancer cell phosphoproteome.</title>
        <authorList>
            <person name="Zhou H."/>
            <person name="Di Palma S."/>
            <person name="Preisinger C."/>
            <person name="Peng M."/>
            <person name="Polat A.N."/>
            <person name="Heck A.J."/>
            <person name="Mohammed S."/>
        </authorList>
    </citation>
    <scope>PHOSPHORYLATION [LARGE SCALE ANALYSIS] AT SER-134</scope>
    <scope>IDENTIFICATION BY MASS SPECTROMETRY [LARGE SCALE ANALYSIS]</scope>
    <source>
        <tissue>Cervix carcinoma</tissue>
    </source>
</reference>
<reference key="12">
    <citation type="journal article" date="2008" name="FEBS J.">
        <title>Structural and functional characterization of human Iba proteins.</title>
        <authorList>
            <person name="Schulze J.O."/>
            <person name="Quedenau C."/>
            <person name="Roske Y."/>
            <person name="Adam T."/>
            <person name="Schueler H."/>
            <person name="Behlke J."/>
            <person name="Turnbull A.P."/>
            <person name="Sievert V."/>
            <person name="Scheich C."/>
            <person name="Mueller U."/>
            <person name="Heinemann U."/>
            <person name="Buessow K."/>
        </authorList>
    </citation>
    <scope>X-RAY CRYSTALLOGRAPHY (2.45 ANGSTROMS)</scope>
    <scope>FUNCTION</scope>
    <scope>SUBCELLULAR LOCATION</scope>
    <scope>LACK OF CALCIUM-BINDING</scope>
    <scope>SUBUNIT</scope>
</reference>
<keyword id="KW-0002">3D-structure</keyword>
<keyword id="KW-0007">Acetylation</keyword>
<keyword id="KW-0009">Actin-binding</keyword>
<keyword id="KW-0025">Alternative splicing</keyword>
<keyword id="KW-0106">Calcium</keyword>
<keyword id="KW-1003">Cell membrane</keyword>
<keyword id="KW-0966">Cell projection</keyword>
<keyword id="KW-0963">Cytoplasm</keyword>
<keyword id="KW-0206">Cytoskeleton</keyword>
<keyword id="KW-0472">Membrane</keyword>
<keyword id="KW-0479">Metal-binding</keyword>
<keyword id="KW-0597">Phosphoprotein</keyword>
<keyword id="KW-1267">Proteomics identification</keyword>
<keyword id="KW-1185">Reference proteome</keyword>
<keyword id="KW-0677">Repeat</keyword>
<accession>Q9BQI0</accession>
<accession>B2RBC4</accession>
<accession>Q6ZR40</accession>
<accession>Q8NAX7</accession>
<accession>Q8WU47</accession>
<accession>Q9H9G0</accession>
<sequence>MSGELSNRFQGGKAFGLLKARQERRLAEINREFLCDQKYSDEENLPEKLTAFKEKYMEFDLNNEGEIDLMSLKRMMEKLGVPKTHLEMKKMISEVTGGVSDTISYRDFVNMMLGKRSAVLKLVMMFEGKANESSPKPVGPPPERDIASLP</sequence>
<feature type="initiator methionine" description="Removed" evidence="7 8">
    <location>
        <position position="1"/>
    </location>
</feature>
<feature type="chain" id="PRO_0000073870" description="Allograft inflammatory factor 1-like">
    <location>
        <begin position="2"/>
        <end position="150"/>
    </location>
</feature>
<feature type="domain" description="EF-hand 1" evidence="1">
    <location>
        <begin position="47"/>
        <end position="82"/>
    </location>
</feature>
<feature type="domain" description="EF-hand 2; degenerate" evidence="6">
    <location>
        <begin position="83"/>
        <end position="117"/>
    </location>
</feature>
<feature type="region of interest" description="Disordered" evidence="2">
    <location>
        <begin position="129"/>
        <end position="150"/>
    </location>
</feature>
<feature type="binding site" evidence="6">
    <location>
        <position position="60"/>
    </location>
    <ligand>
        <name>Ca(2+)</name>
        <dbReference type="ChEBI" id="CHEBI:29108"/>
    </ligand>
</feature>
<feature type="binding site" evidence="6">
    <location>
        <position position="62"/>
    </location>
    <ligand>
        <name>Ca(2+)</name>
        <dbReference type="ChEBI" id="CHEBI:29108"/>
    </ligand>
</feature>
<feature type="binding site" evidence="6">
    <location>
        <position position="64"/>
    </location>
    <ligand>
        <name>Ca(2+)</name>
        <dbReference type="ChEBI" id="CHEBI:29108"/>
    </ligand>
</feature>
<feature type="binding site" evidence="6">
    <location>
        <position position="66"/>
    </location>
    <ligand>
        <name>Ca(2+)</name>
        <dbReference type="ChEBI" id="CHEBI:29108"/>
    </ligand>
</feature>
<feature type="modified residue" description="N-acetylserine" evidence="7 8">
    <location>
        <position position="2"/>
    </location>
</feature>
<feature type="modified residue" description="Phosphoserine" evidence="8">
    <location>
        <position position="2"/>
    </location>
</feature>
<feature type="modified residue" description="Phosphoserine" evidence="9">
    <location>
        <position position="134"/>
    </location>
</feature>
<feature type="splice variant" id="VSP_017150" description="In isoform 2." evidence="4">
    <original>R</original>
    <variation>RYCAGREPQLQRISCSQHSCLLALLFQ</variation>
    <location>
        <position position="31"/>
    </location>
</feature>
<feature type="splice variant" id="VSP_017151" description="In isoform 3." evidence="4">
    <location>
        <begin position="60"/>
        <end position="67"/>
    </location>
</feature>
<feature type="splice variant" id="VSP_017152" description="In isoform 4." evidence="5">
    <original>VSDT</original>
    <variation>SHDV</variation>
    <location>
        <begin position="99"/>
        <end position="102"/>
    </location>
</feature>
<feature type="splice variant" id="VSP_017153" description="In isoform 4." evidence="5">
    <location>
        <begin position="103"/>
        <end position="150"/>
    </location>
</feature>
<feature type="sequence conflict" description="In Ref. 3; BAB14269." evidence="6" ref="3">
    <original>F</original>
    <variation>L</variation>
    <location>
        <position position="33"/>
    </location>
</feature>
<feature type="helix" evidence="10">
    <location>
        <begin position="17"/>
        <end position="34"/>
    </location>
</feature>
<feature type="helix" evidence="10">
    <location>
        <begin position="37"/>
        <end position="39"/>
    </location>
</feature>
<feature type="helix" evidence="10">
    <location>
        <begin position="45"/>
        <end position="56"/>
    </location>
</feature>
<feature type="strand" evidence="10">
    <location>
        <begin position="65"/>
        <end position="67"/>
    </location>
</feature>
<feature type="helix" evidence="10">
    <location>
        <begin position="69"/>
        <end position="78"/>
    </location>
</feature>
<feature type="helix" evidence="10">
    <location>
        <begin position="85"/>
        <end position="96"/>
    </location>
</feature>
<feature type="strand" evidence="10">
    <location>
        <begin position="101"/>
        <end position="103"/>
    </location>
</feature>
<feature type="helix" evidence="10">
    <location>
        <begin position="105"/>
        <end position="113"/>
    </location>
</feature>
<feature type="strand" evidence="10">
    <location>
        <begin position="114"/>
        <end position="116"/>
    </location>
</feature>
<feature type="helix" evidence="10">
    <location>
        <begin position="119"/>
        <end position="124"/>
    </location>
</feature>
<name>AIF1L_HUMAN</name>
<dbReference type="EMBL" id="AL136566">
    <property type="protein sequence ID" value="CAB66501.1"/>
    <property type="molecule type" value="mRNA"/>
</dbReference>
<dbReference type="EMBL" id="AY359067">
    <property type="protein sequence ID" value="AAQ89426.1"/>
    <property type="molecule type" value="mRNA"/>
</dbReference>
<dbReference type="EMBL" id="AK022845">
    <property type="protein sequence ID" value="BAB14269.1"/>
    <property type="molecule type" value="mRNA"/>
</dbReference>
<dbReference type="EMBL" id="AK091912">
    <property type="protein sequence ID" value="BAC03770.1"/>
    <property type="molecule type" value="mRNA"/>
</dbReference>
<dbReference type="EMBL" id="AK128526">
    <property type="protein sequence ID" value="BAC87480.1"/>
    <property type="molecule type" value="mRNA"/>
</dbReference>
<dbReference type="EMBL" id="AK314600">
    <property type="protein sequence ID" value="BAG37171.1"/>
    <property type="molecule type" value="mRNA"/>
</dbReference>
<dbReference type="EMBL" id="AL833896">
    <property type="protein sequence ID" value="CAD38752.1"/>
    <property type="molecule type" value="mRNA"/>
</dbReference>
<dbReference type="EMBL" id="AL157938">
    <property type="status" value="NOT_ANNOTATED_CDS"/>
    <property type="molecule type" value="Genomic_DNA"/>
</dbReference>
<dbReference type="EMBL" id="CH471090">
    <property type="protein sequence ID" value="EAW87958.1"/>
    <property type="molecule type" value="Genomic_DNA"/>
</dbReference>
<dbReference type="EMBL" id="BC021253">
    <property type="protein sequence ID" value="AAH21253.1"/>
    <property type="molecule type" value="mRNA"/>
</dbReference>
<dbReference type="CCDS" id="CCDS55348.1">
    <molecule id="Q9BQI0-2"/>
</dbReference>
<dbReference type="CCDS" id="CCDS55349.1">
    <molecule id="Q9BQI0-4"/>
</dbReference>
<dbReference type="CCDS" id="CCDS6939.1">
    <molecule id="Q9BQI0-1"/>
</dbReference>
<dbReference type="RefSeq" id="NP_001172024.1">
    <molecule id="Q9BQI0-2"/>
    <property type="nucleotide sequence ID" value="NM_001185095.2"/>
</dbReference>
<dbReference type="RefSeq" id="NP_001172025.1">
    <molecule id="Q9BQI0-4"/>
    <property type="nucleotide sequence ID" value="NM_001185096.2"/>
</dbReference>
<dbReference type="RefSeq" id="NP_113614.1">
    <molecule id="Q9BQI0-1"/>
    <property type="nucleotide sequence ID" value="NM_031426.4"/>
</dbReference>
<dbReference type="PDB" id="2JJZ">
    <property type="method" value="X-ray"/>
    <property type="resolution" value="2.15 A"/>
    <property type="chains" value="B/C/D=1-150"/>
</dbReference>
<dbReference type="PDB" id="2VTG">
    <property type="method" value="X-ray"/>
    <property type="resolution" value="2.45 A"/>
    <property type="chains" value="A=1-150"/>
</dbReference>
<dbReference type="PDBsum" id="2JJZ"/>
<dbReference type="PDBsum" id="2VTG"/>
<dbReference type="SMR" id="Q9BQI0"/>
<dbReference type="BioGRID" id="123676">
    <property type="interactions" value="60"/>
</dbReference>
<dbReference type="FunCoup" id="Q9BQI0">
    <property type="interactions" value="66"/>
</dbReference>
<dbReference type="IntAct" id="Q9BQI0">
    <property type="interactions" value="16"/>
</dbReference>
<dbReference type="MINT" id="Q9BQI0"/>
<dbReference type="STRING" id="9606.ENSP00000361383"/>
<dbReference type="iPTMnet" id="Q9BQI0"/>
<dbReference type="PhosphoSitePlus" id="Q9BQI0"/>
<dbReference type="BioMuta" id="AIF1L"/>
<dbReference type="jPOST" id="Q9BQI0"/>
<dbReference type="MassIVE" id="Q9BQI0"/>
<dbReference type="PeptideAtlas" id="Q9BQI0"/>
<dbReference type="ProteomicsDB" id="78678">
    <molecule id="Q9BQI0-1"/>
</dbReference>
<dbReference type="ProteomicsDB" id="78679">
    <molecule id="Q9BQI0-2"/>
</dbReference>
<dbReference type="ProteomicsDB" id="78680">
    <molecule id="Q9BQI0-3"/>
</dbReference>
<dbReference type="ProteomicsDB" id="78681">
    <molecule id="Q9BQI0-4"/>
</dbReference>
<dbReference type="Pumba" id="Q9BQI0"/>
<dbReference type="TopDownProteomics" id="Q9BQI0-2">
    <molecule id="Q9BQI0-2"/>
</dbReference>
<dbReference type="Antibodypedia" id="31561">
    <property type="antibodies" value="23 antibodies from 9 providers"/>
</dbReference>
<dbReference type="DNASU" id="83543"/>
<dbReference type="Ensembl" id="ENST00000247291.8">
    <molecule id="Q9BQI0-1"/>
    <property type="protein sequence ID" value="ENSP00000247291.3"/>
    <property type="gene ID" value="ENSG00000126878.13"/>
</dbReference>
<dbReference type="Ensembl" id="ENST00000372300.5">
    <molecule id="Q9BQI0-4"/>
    <property type="protein sequence ID" value="ENSP00000361374.1"/>
    <property type="gene ID" value="ENSG00000126878.13"/>
</dbReference>
<dbReference type="Ensembl" id="ENST00000372302.5">
    <molecule id="Q9BQI0-3"/>
    <property type="protein sequence ID" value="ENSP00000361376.1"/>
    <property type="gene ID" value="ENSG00000126878.13"/>
</dbReference>
<dbReference type="Ensembl" id="ENST00000372309.7">
    <molecule id="Q9BQI0-2"/>
    <property type="protein sequence ID" value="ENSP00000361383.3"/>
    <property type="gene ID" value="ENSG00000126878.13"/>
</dbReference>
<dbReference type="GeneID" id="83543"/>
<dbReference type="KEGG" id="hsa:83543"/>
<dbReference type="MANE-Select" id="ENST00000247291.8">
    <property type="protein sequence ID" value="ENSP00000247291.3"/>
    <property type="RefSeq nucleotide sequence ID" value="NM_031426.4"/>
    <property type="RefSeq protein sequence ID" value="NP_113614.1"/>
</dbReference>
<dbReference type="UCSC" id="uc004cab.3">
    <molecule id="Q9BQI0-1"/>
    <property type="organism name" value="human"/>
</dbReference>
<dbReference type="AGR" id="HGNC:28904"/>
<dbReference type="CTD" id="83543"/>
<dbReference type="DisGeNET" id="83543"/>
<dbReference type="GeneCards" id="AIF1L"/>
<dbReference type="HGNC" id="HGNC:28904">
    <property type="gene designation" value="AIF1L"/>
</dbReference>
<dbReference type="HPA" id="ENSG00000126878">
    <property type="expression patterns" value="Tissue enhanced (brain, kidney, lymphoid tissue)"/>
</dbReference>
<dbReference type="neXtProt" id="NX_Q9BQI0"/>
<dbReference type="OpenTargets" id="ENSG00000126878"/>
<dbReference type="PharmGKB" id="PA164715250"/>
<dbReference type="VEuPathDB" id="HostDB:ENSG00000126878"/>
<dbReference type="GeneTree" id="ENSGT00390000013846"/>
<dbReference type="HOGENOM" id="CLU_134149_1_0_1"/>
<dbReference type="InParanoid" id="Q9BQI0"/>
<dbReference type="OMA" id="MDFGMSV"/>
<dbReference type="OrthoDB" id="26525at2759"/>
<dbReference type="PAN-GO" id="Q9BQI0">
    <property type="GO annotations" value="6 GO annotations based on evolutionary models"/>
</dbReference>
<dbReference type="PhylomeDB" id="Q9BQI0"/>
<dbReference type="TreeFam" id="TF320736"/>
<dbReference type="PathwayCommons" id="Q9BQI0"/>
<dbReference type="SignaLink" id="Q9BQI0"/>
<dbReference type="BioGRID-ORCS" id="83543">
    <property type="hits" value="19 hits in 1152 CRISPR screens"/>
</dbReference>
<dbReference type="ChiTaRS" id="AIF1L">
    <property type="organism name" value="human"/>
</dbReference>
<dbReference type="EvolutionaryTrace" id="Q9BQI0"/>
<dbReference type="GeneWiki" id="C9orf58"/>
<dbReference type="GenomeRNAi" id="83543"/>
<dbReference type="Pharos" id="Q9BQI0">
    <property type="development level" value="Tbio"/>
</dbReference>
<dbReference type="PRO" id="PR:Q9BQI0"/>
<dbReference type="Proteomes" id="UP000005640">
    <property type="component" value="Chromosome 9"/>
</dbReference>
<dbReference type="RNAct" id="Q9BQI0">
    <property type="molecule type" value="protein"/>
</dbReference>
<dbReference type="Bgee" id="ENSG00000126878">
    <property type="expression patterns" value="Expressed in renal medulla and 176 other cell types or tissues"/>
</dbReference>
<dbReference type="ExpressionAtlas" id="Q9BQI0">
    <property type="expression patterns" value="baseline and differential"/>
</dbReference>
<dbReference type="GO" id="GO:0015629">
    <property type="term" value="C:actin cytoskeleton"/>
    <property type="evidence" value="ECO:0000314"/>
    <property type="project" value="LIFEdb"/>
</dbReference>
<dbReference type="GO" id="GO:0005737">
    <property type="term" value="C:cytoplasm"/>
    <property type="evidence" value="ECO:0007669"/>
    <property type="project" value="UniProtKB-KW"/>
</dbReference>
<dbReference type="GO" id="GO:0070062">
    <property type="term" value="C:extracellular exosome"/>
    <property type="evidence" value="ECO:0007005"/>
    <property type="project" value="UniProtKB"/>
</dbReference>
<dbReference type="GO" id="GO:0005925">
    <property type="term" value="C:focal adhesion"/>
    <property type="evidence" value="ECO:0000314"/>
    <property type="project" value="LIFEdb"/>
</dbReference>
<dbReference type="GO" id="GO:0032587">
    <property type="term" value="C:ruffle membrane"/>
    <property type="evidence" value="ECO:0007669"/>
    <property type="project" value="UniProtKB-SubCell"/>
</dbReference>
<dbReference type="GO" id="GO:0051015">
    <property type="term" value="F:actin filament binding"/>
    <property type="evidence" value="ECO:0000314"/>
    <property type="project" value="UniProtKB"/>
</dbReference>
<dbReference type="GO" id="GO:0005509">
    <property type="term" value="F:calcium ion binding"/>
    <property type="evidence" value="ECO:0000318"/>
    <property type="project" value="GO_Central"/>
</dbReference>
<dbReference type="GO" id="GO:0051017">
    <property type="term" value="P:actin filament bundle assembly"/>
    <property type="evidence" value="ECO:0000318"/>
    <property type="project" value="GO_Central"/>
</dbReference>
<dbReference type="GO" id="GO:0097178">
    <property type="term" value="P:ruffle assembly"/>
    <property type="evidence" value="ECO:0000318"/>
    <property type="project" value="GO_Central"/>
</dbReference>
<dbReference type="FunFam" id="1.10.238.10:FF:000106">
    <property type="entry name" value="Allograft inflammatory factor 1"/>
    <property type="match status" value="1"/>
</dbReference>
<dbReference type="Gene3D" id="1.10.238.10">
    <property type="entry name" value="EF-hand"/>
    <property type="match status" value="1"/>
</dbReference>
<dbReference type="InterPro" id="IPR049025">
    <property type="entry name" value="AIF-1_EF_pair"/>
</dbReference>
<dbReference type="InterPro" id="IPR042433">
    <property type="entry name" value="AIF1/AIF1L"/>
</dbReference>
<dbReference type="InterPro" id="IPR011992">
    <property type="entry name" value="EF-hand-dom_pair"/>
</dbReference>
<dbReference type="InterPro" id="IPR002048">
    <property type="entry name" value="EF_hand_dom"/>
</dbReference>
<dbReference type="PANTHER" id="PTHR10356:SF5">
    <property type="entry name" value="ALLOGRAFT INFLAMMATORY FACTOR 1-LIKE"/>
    <property type="match status" value="1"/>
</dbReference>
<dbReference type="PANTHER" id="PTHR10356">
    <property type="entry name" value="ALLOGRAFT INFLAMMATORY FACTOR-1"/>
    <property type="match status" value="1"/>
</dbReference>
<dbReference type="Pfam" id="PF21008">
    <property type="entry name" value="AIF-1"/>
    <property type="match status" value="1"/>
</dbReference>
<dbReference type="SUPFAM" id="SSF47473">
    <property type="entry name" value="EF-hand"/>
    <property type="match status" value="1"/>
</dbReference>
<dbReference type="PROSITE" id="PS50222">
    <property type="entry name" value="EF_HAND_2"/>
    <property type="match status" value="1"/>
</dbReference>
<protein>
    <recommendedName>
        <fullName>Allograft inflammatory factor 1-like</fullName>
    </recommendedName>
    <alternativeName>
        <fullName>Ionized calcium-binding adapter molecule 2</fullName>
    </alternativeName>
</protein>
<proteinExistence type="evidence at protein level"/>
<comment type="function">
    <text evidence="3">Actin-binding protein that promotes actin bundling. May neither bind calcium nor depend on calcium for function.</text>
</comment>
<comment type="subunit">
    <text evidence="3 6">Homodimer (Potential). Monomer.</text>
</comment>
<comment type="interaction">
    <interactant intactId="EBI-12351549">
        <id>Q9BQI0-4</id>
    </interactant>
    <interactant intactId="EBI-12039345">
        <id>Q9UBR4-2</id>
        <label>LHX3</label>
    </interactant>
    <organismsDiffer>false</organismsDiffer>
    <experiments>3</experiments>
</comment>
<comment type="interaction">
    <interactant intactId="EBI-12351549">
        <id>Q9BQI0-4</id>
    </interactant>
    <interactant intactId="EBI-372432">
        <id>Q8WW01</id>
        <label>TSEN15</label>
    </interactant>
    <organismsDiffer>false</organismsDiffer>
    <experiments>3</experiments>
</comment>
<comment type="subcellular location">
    <subcellularLocation>
        <location evidence="3">Cytoplasm</location>
        <location evidence="3">Cytoskeleton</location>
    </subcellularLocation>
    <subcellularLocation>
        <location evidence="3">Cell projection</location>
        <location evidence="3">Ruffle membrane</location>
        <topology evidence="3">Peripheral membrane protein</topology>
        <orientation evidence="3">Cytoplasmic side</orientation>
    </subcellularLocation>
    <text>Colocalizes with F-actin. Partially relocates to membrane ruffles in response to invading bacteria.</text>
</comment>
<comment type="alternative products">
    <event type="alternative splicing"/>
    <isoform>
        <id>Q9BQI0-1</id>
        <name>1</name>
        <sequence type="displayed"/>
    </isoform>
    <isoform>
        <id>Q9BQI0-2</id>
        <name>2</name>
        <sequence type="described" ref="VSP_017150"/>
    </isoform>
    <isoform>
        <id>Q9BQI0-3</id>
        <name>3</name>
        <sequence type="described" ref="VSP_017151"/>
    </isoform>
    <isoform>
        <id>Q9BQI0-4</id>
        <name>4</name>
        <sequence type="described" ref="VSP_017152 VSP_017153"/>
    </isoform>
</comment>